<organism>
    <name type="scientific">Vibrio vulnificus (strain CMCP6)</name>
    <dbReference type="NCBI Taxonomy" id="216895"/>
    <lineage>
        <taxon>Bacteria</taxon>
        <taxon>Pseudomonadati</taxon>
        <taxon>Pseudomonadota</taxon>
        <taxon>Gammaproteobacteria</taxon>
        <taxon>Vibrionales</taxon>
        <taxon>Vibrionaceae</taxon>
        <taxon>Vibrio</taxon>
    </lineage>
</organism>
<feature type="chain" id="PRO_0000184365" description="Ribosomal RNA small subunit methyltransferase G">
    <location>
        <begin position="1"/>
        <end position="211"/>
    </location>
</feature>
<feature type="binding site" evidence="1">
    <location>
        <position position="76"/>
    </location>
    <ligand>
        <name>S-adenosyl-L-methionine</name>
        <dbReference type="ChEBI" id="CHEBI:59789"/>
    </ligand>
</feature>
<feature type="binding site" evidence="1">
    <location>
        <position position="81"/>
    </location>
    <ligand>
        <name>S-adenosyl-L-methionine</name>
        <dbReference type="ChEBI" id="CHEBI:59789"/>
    </ligand>
</feature>
<feature type="binding site" evidence="1">
    <location>
        <begin position="127"/>
        <end position="128"/>
    </location>
    <ligand>
        <name>S-adenosyl-L-methionine</name>
        <dbReference type="ChEBI" id="CHEBI:59789"/>
    </ligand>
</feature>
<feature type="binding site" evidence="1">
    <location>
        <position position="142"/>
    </location>
    <ligand>
        <name>S-adenosyl-L-methionine</name>
        <dbReference type="ChEBI" id="CHEBI:59789"/>
    </ligand>
</feature>
<accession>Q8DDH8</accession>
<comment type="function">
    <text evidence="1">Specifically methylates the N7 position of guanine in position 527 of 16S rRNA.</text>
</comment>
<comment type="catalytic activity">
    <reaction evidence="1">
        <text>guanosine(527) in 16S rRNA + S-adenosyl-L-methionine = N(7)-methylguanosine(527) in 16S rRNA + S-adenosyl-L-homocysteine</text>
        <dbReference type="Rhea" id="RHEA:42732"/>
        <dbReference type="Rhea" id="RHEA-COMP:10209"/>
        <dbReference type="Rhea" id="RHEA-COMP:10210"/>
        <dbReference type="ChEBI" id="CHEBI:57856"/>
        <dbReference type="ChEBI" id="CHEBI:59789"/>
        <dbReference type="ChEBI" id="CHEBI:74269"/>
        <dbReference type="ChEBI" id="CHEBI:74480"/>
        <dbReference type="EC" id="2.1.1.170"/>
    </reaction>
</comment>
<comment type="subcellular location">
    <subcellularLocation>
        <location evidence="1">Cytoplasm</location>
    </subcellularLocation>
</comment>
<comment type="similarity">
    <text evidence="1">Belongs to the methyltransferase superfamily. RNA methyltransferase RsmG family.</text>
</comment>
<keyword id="KW-0963">Cytoplasm</keyword>
<keyword id="KW-0489">Methyltransferase</keyword>
<keyword id="KW-0698">rRNA processing</keyword>
<keyword id="KW-0949">S-adenosyl-L-methionine</keyword>
<keyword id="KW-0808">Transferase</keyword>
<protein>
    <recommendedName>
        <fullName evidence="1">Ribosomal RNA small subunit methyltransferase G</fullName>
        <ecNumber evidence="1">2.1.1.170</ecNumber>
    </recommendedName>
    <alternativeName>
        <fullName evidence="1">16S rRNA 7-methylguanosine methyltransferase</fullName>
        <shortName evidence="1">16S rRNA m7G methyltransferase</shortName>
    </alternativeName>
</protein>
<reference key="1">
    <citation type="submission" date="2002-12" db="EMBL/GenBank/DDBJ databases">
        <title>Complete genome sequence of Vibrio vulnificus CMCP6.</title>
        <authorList>
            <person name="Rhee J.H."/>
            <person name="Kim S.Y."/>
            <person name="Chung S.S."/>
            <person name="Kim J.J."/>
            <person name="Moon Y.H."/>
            <person name="Jeong H."/>
            <person name="Choy H.E."/>
        </authorList>
    </citation>
    <scope>NUCLEOTIDE SEQUENCE [LARGE SCALE GENOMIC DNA]</scope>
    <source>
        <strain>CMCP6</strain>
    </source>
</reference>
<evidence type="ECO:0000255" key="1">
    <source>
        <dbReference type="HAMAP-Rule" id="MF_00074"/>
    </source>
</evidence>
<name>RSMG_VIBVU</name>
<dbReference type="EC" id="2.1.1.170" evidence="1"/>
<dbReference type="EMBL" id="AE016795">
    <property type="protein sequence ID" value="AAO09499.1"/>
    <property type="molecule type" value="Genomic_DNA"/>
</dbReference>
<dbReference type="RefSeq" id="WP_011079045.1">
    <property type="nucleotide sequence ID" value="NC_004459.3"/>
</dbReference>
<dbReference type="SMR" id="Q8DDH8"/>
<dbReference type="KEGG" id="vvu:VV1_1011"/>
<dbReference type="HOGENOM" id="CLU_065341_2_2_6"/>
<dbReference type="Proteomes" id="UP000002275">
    <property type="component" value="Chromosome 1"/>
</dbReference>
<dbReference type="GO" id="GO:0005829">
    <property type="term" value="C:cytosol"/>
    <property type="evidence" value="ECO:0007669"/>
    <property type="project" value="TreeGrafter"/>
</dbReference>
<dbReference type="GO" id="GO:0070043">
    <property type="term" value="F:rRNA (guanine-N7-)-methyltransferase activity"/>
    <property type="evidence" value="ECO:0007669"/>
    <property type="project" value="UniProtKB-UniRule"/>
</dbReference>
<dbReference type="CDD" id="cd02440">
    <property type="entry name" value="AdoMet_MTases"/>
    <property type="match status" value="1"/>
</dbReference>
<dbReference type="FunFam" id="3.40.50.150:FF:000032">
    <property type="entry name" value="Ribosomal RNA small subunit methyltransferase G"/>
    <property type="match status" value="1"/>
</dbReference>
<dbReference type="Gene3D" id="3.40.50.150">
    <property type="entry name" value="Vaccinia Virus protein VP39"/>
    <property type="match status" value="1"/>
</dbReference>
<dbReference type="HAMAP" id="MF_00074">
    <property type="entry name" value="16SrRNA_methyltr_G"/>
    <property type="match status" value="1"/>
</dbReference>
<dbReference type="InterPro" id="IPR003682">
    <property type="entry name" value="rRNA_ssu_MeTfrase_G"/>
</dbReference>
<dbReference type="InterPro" id="IPR029063">
    <property type="entry name" value="SAM-dependent_MTases_sf"/>
</dbReference>
<dbReference type="NCBIfam" id="TIGR00138">
    <property type="entry name" value="rsmG_gidB"/>
    <property type="match status" value="1"/>
</dbReference>
<dbReference type="PANTHER" id="PTHR31760">
    <property type="entry name" value="S-ADENOSYL-L-METHIONINE-DEPENDENT METHYLTRANSFERASES SUPERFAMILY PROTEIN"/>
    <property type="match status" value="1"/>
</dbReference>
<dbReference type="PANTHER" id="PTHR31760:SF0">
    <property type="entry name" value="S-ADENOSYL-L-METHIONINE-DEPENDENT METHYLTRANSFERASES SUPERFAMILY PROTEIN"/>
    <property type="match status" value="1"/>
</dbReference>
<dbReference type="Pfam" id="PF02527">
    <property type="entry name" value="GidB"/>
    <property type="match status" value="1"/>
</dbReference>
<dbReference type="PIRSF" id="PIRSF003078">
    <property type="entry name" value="GidB"/>
    <property type="match status" value="1"/>
</dbReference>
<dbReference type="SUPFAM" id="SSF53335">
    <property type="entry name" value="S-adenosyl-L-methionine-dependent methyltransferases"/>
    <property type="match status" value="1"/>
</dbReference>
<sequence length="211" mass="24095">MSALRQKLDALIEQTDLQVNERQREQLLGYVELLNKWNKAYNLTSVRDPQDMLVKHILDSIVVAPHLDGERFIDVGTGPGLPGIPLAIMHPEKTFFLLDSLGKRIRFIKQVLHELKIENVTTVQSRVEEFQPEEKFDGVLSRAFASMTDMVEWCHHLPKTGQGVFLALKGLHPKDEIDQLPEWCSVTEIISLTVPELEGDRHLVILSRKDN</sequence>
<proteinExistence type="inferred from homology"/>
<gene>
    <name evidence="1" type="primary">rsmG</name>
    <name type="ordered locus">VV1_1011</name>
</gene>